<organism>
    <name type="scientific">Haloferax mediterranei</name>
    <name type="common">Halobacterium mediterranei</name>
    <dbReference type="NCBI Taxonomy" id="2252"/>
    <lineage>
        <taxon>Archaea</taxon>
        <taxon>Methanobacteriati</taxon>
        <taxon>Methanobacteriota</taxon>
        <taxon>Stenosarchaea group</taxon>
        <taxon>Halobacteria</taxon>
        <taxon>Halobacteriales</taxon>
        <taxon>Haloferacaceae</taxon>
        <taxon>Haloferax</taxon>
    </lineage>
</organism>
<feature type="chain" id="PRO_0000160120" description="Superoxide dismutase [Mn] 2">
    <location>
        <begin position="1" status="less than"/>
        <end position="146" status="greater than"/>
    </location>
</feature>
<feature type="binding site" evidence="1">
    <location>
        <position position="42"/>
    </location>
    <ligand>
        <name>Mn(2+)</name>
        <dbReference type="ChEBI" id="CHEBI:29035"/>
    </ligand>
</feature>
<feature type="binding site" evidence="1">
    <location>
        <position position="126"/>
    </location>
    <ligand>
        <name>Mn(2+)</name>
        <dbReference type="ChEBI" id="CHEBI:29035"/>
    </ligand>
</feature>
<feature type="binding site" evidence="1">
    <location>
        <position position="130"/>
    </location>
    <ligand>
        <name>Mn(2+)</name>
        <dbReference type="ChEBI" id="CHEBI:29035"/>
    </ligand>
</feature>
<feature type="non-terminal residue">
    <location>
        <position position="1"/>
    </location>
</feature>
<feature type="non-terminal residue">
    <location>
        <position position="146"/>
    </location>
</feature>
<sequence length="146" mass="16147">GYVNGLNAAEETLRENRSSGDMDGSAAAMRSVSHNGCGHYLHHLFWRCMTPNGGGGEPTGDLRDRIESDFGSYEGWEAEFREAASWPAGGWALLVYDPVTKQLRNLAVQKHNDGALWSAHPILALDVWEHSYYFQYGPDRGGFVDA</sequence>
<comment type="function">
    <text>Destroys superoxide anion radicals which are normally produced within the cells and which are toxic to biological systems.</text>
</comment>
<comment type="catalytic activity">
    <reaction>
        <text>2 superoxide + 2 H(+) = H2O2 + O2</text>
        <dbReference type="Rhea" id="RHEA:20696"/>
        <dbReference type="ChEBI" id="CHEBI:15378"/>
        <dbReference type="ChEBI" id="CHEBI:15379"/>
        <dbReference type="ChEBI" id="CHEBI:16240"/>
        <dbReference type="ChEBI" id="CHEBI:18421"/>
        <dbReference type="EC" id="1.15.1.1"/>
    </reaction>
</comment>
<comment type="cofactor">
    <cofactor evidence="1">
        <name>Mn(2+)</name>
        <dbReference type="ChEBI" id="CHEBI:29035"/>
    </cofactor>
    <text evidence="1">Binds 1 Mn(2+) ion per subunit.</text>
</comment>
<comment type="similarity">
    <text evidence="2">Belongs to the iron/manganese superoxide dismutase family.</text>
</comment>
<keyword id="KW-0464">Manganese</keyword>
<keyword id="KW-0479">Metal-binding</keyword>
<keyword id="KW-0560">Oxidoreductase</keyword>
<name>SODM2_HALME</name>
<accession>O08460</accession>
<dbReference type="EC" id="1.15.1.1"/>
<dbReference type="EMBL" id="U78907">
    <property type="protein sequence ID" value="AAB60931.1"/>
    <property type="molecule type" value="Genomic_DNA"/>
</dbReference>
<dbReference type="SMR" id="O08460"/>
<dbReference type="GO" id="GO:0046872">
    <property type="term" value="F:metal ion binding"/>
    <property type="evidence" value="ECO:0007669"/>
    <property type="project" value="UniProtKB-KW"/>
</dbReference>
<dbReference type="GO" id="GO:0004784">
    <property type="term" value="F:superoxide dismutase activity"/>
    <property type="evidence" value="ECO:0007669"/>
    <property type="project" value="UniProtKB-EC"/>
</dbReference>
<dbReference type="Gene3D" id="1.10.287.990">
    <property type="entry name" value="Fe,Mn superoxide dismutase (SOD) domain"/>
    <property type="match status" value="1"/>
</dbReference>
<dbReference type="Gene3D" id="3.55.40.20">
    <property type="entry name" value="Iron/manganese superoxide dismutase, C-terminal domain"/>
    <property type="match status" value="1"/>
</dbReference>
<dbReference type="InterPro" id="IPR050265">
    <property type="entry name" value="Fe/Mn_Superoxide_Dismutase"/>
</dbReference>
<dbReference type="InterPro" id="IPR019833">
    <property type="entry name" value="Mn/Fe_SOD_BS"/>
</dbReference>
<dbReference type="InterPro" id="IPR019832">
    <property type="entry name" value="Mn/Fe_SOD_C"/>
</dbReference>
<dbReference type="InterPro" id="IPR019831">
    <property type="entry name" value="Mn/Fe_SOD_N"/>
</dbReference>
<dbReference type="InterPro" id="IPR036324">
    <property type="entry name" value="Mn/Fe_SOD_N_sf"/>
</dbReference>
<dbReference type="InterPro" id="IPR036314">
    <property type="entry name" value="SOD_C_sf"/>
</dbReference>
<dbReference type="PANTHER" id="PTHR11404">
    <property type="entry name" value="SUPEROXIDE DISMUTASE 2"/>
    <property type="match status" value="1"/>
</dbReference>
<dbReference type="PANTHER" id="PTHR11404:SF6">
    <property type="entry name" value="SUPEROXIDE DISMUTASE [MN], MITOCHONDRIAL"/>
    <property type="match status" value="1"/>
</dbReference>
<dbReference type="Pfam" id="PF02777">
    <property type="entry name" value="Sod_Fe_C"/>
    <property type="match status" value="1"/>
</dbReference>
<dbReference type="Pfam" id="PF00081">
    <property type="entry name" value="Sod_Fe_N"/>
    <property type="match status" value="1"/>
</dbReference>
<dbReference type="SUPFAM" id="SSF54719">
    <property type="entry name" value="Fe,Mn superoxide dismutase (SOD), C-terminal domain"/>
    <property type="match status" value="1"/>
</dbReference>
<dbReference type="SUPFAM" id="SSF46609">
    <property type="entry name" value="Fe,Mn superoxide dismutase (SOD), N-terminal domain"/>
    <property type="match status" value="1"/>
</dbReference>
<dbReference type="PROSITE" id="PS00088">
    <property type="entry name" value="SOD_MN"/>
    <property type="match status" value="1"/>
</dbReference>
<protein>
    <recommendedName>
        <fullName>Superoxide dismutase [Mn] 2</fullName>
        <ecNumber>1.15.1.1</ecNumber>
    </recommendedName>
</protein>
<proteinExistence type="inferred from homology"/>
<reference key="1">
    <citation type="journal article" date="1997" name="Microbiol. Mol. Biol. Rev.">
        <title>Evolutionary divergence and salinity-mediated selection in halophilic archaea.</title>
        <authorList>
            <person name="Dennis P.P."/>
            <person name="Shimmin L.C."/>
        </authorList>
    </citation>
    <scope>NUCLEOTIDE SEQUENCE [GENOMIC DNA]</scope>
</reference>
<evidence type="ECO:0000250" key="1"/>
<evidence type="ECO:0000305" key="2"/>
<gene>
    <name type="primary">sod2</name>
</gene>